<gene>
    <name type="primary">cah-1</name>
    <name type="ORF">F54D8.4</name>
</gene>
<proteinExistence type="inferred from homology"/>
<name>CAH1_CAEEL</name>
<comment type="subcellular location">
    <subcellularLocation>
        <location evidence="4">Secreted</location>
    </subcellularLocation>
</comment>
<comment type="similarity">
    <text evidence="4">Belongs to the alpha-carbonic anhydrase family.</text>
</comment>
<comment type="caution">
    <text evidence="4">Has lost two of the three potential zinc-binding residues and therefore may not be active.</text>
</comment>
<organism>
    <name type="scientific">Caenorhabditis elegans</name>
    <dbReference type="NCBI Taxonomy" id="6239"/>
    <lineage>
        <taxon>Eukaryota</taxon>
        <taxon>Metazoa</taxon>
        <taxon>Ecdysozoa</taxon>
        <taxon>Nematoda</taxon>
        <taxon>Chromadorea</taxon>
        <taxon>Rhabditida</taxon>
        <taxon>Rhabditina</taxon>
        <taxon>Rhabditomorpha</taxon>
        <taxon>Rhabditoidea</taxon>
        <taxon>Rhabditidae</taxon>
        <taxon>Peloderinae</taxon>
        <taxon>Caenorhabditis</taxon>
    </lineage>
</organism>
<keyword id="KW-1185">Reference proteome</keyword>
<keyword id="KW-0964">Secreted</keyword>
<keyword id="KW-0732">Signal</keyword>
<dbReference type="EMBL" id="FO080874">
    <property type="protein sequence ID" value="CCD67410.1"/>
    <property type="molecule type" value="Genomic_DNA"/>
</dbReference>
<dbReference type="PIR" id="F88449">
    <property type="entry name" value="F88449"/>
</dbReference>
<dbReference type="RefSeq" id="NP_001309492.1">
    <property type="nucleotide sequence ID" value="NM_001322586.1"/>
</dbReference>
<dbReference type="SMR" id="Q20781"/>
<dbReference type="FunCoup" id="Q20781">
    <property type="interactions" value="373"/>
</dbReference>
<dbReference type="STRING" id="6239.F54D8.4a.1"/>
<dbReference type="PaxDb" id="6239-F54D8.4"/>
<dbReference type="EnsemblMetazoa" id="F54D8.4a.1">
    <property type="protein sequence ID" value="F54D8.4a.1"/>
    <property type="gene ID" value="WBGene00000279"/>
</dbReference>
<dbReference type="GeneID" id="186231"/>
<dbReference type="KEGG" id="cel:CELE_F54D8.4"/>
<dbReference type="UCSC" id="F54D8.4">
    <property type="organism name" value="c. elegans"/>
</dbReference>
<dbReference type="AGR" id="WB:WBGene00000279"/>
<dbReference type="CTD" id="186231"/>
<dbReference type="WormBase" id="F54D8.4a">
    <property type="protein sequence ID" value="CE51243"/>
    <property type="gene ID" value="WBGene00000279"/>
    <property type="gene designation" value="cah-1"/>
</dbReference>
<dbReference type="eggNOG" id="KOG0382">
    <property type="taxonomic scope" value="Eukaryota"/>
</dbReference>
<dbReference type="GeneTree" id="ENSGT00940000169337"/>
<dbReference type="HOGENOM" id="CLU_039326_7_1_1"/>
<dbReference type="InParanoid" id="Q20781"/>
<dbReference type="OMA" id="TYRANSP"/>
<dbReference type="OrthoDB" id="5978072at2759"/>
<dbReference type="PhylomeDB" id="Q20781"/>
<dbReference type="PRO" id="PR:Q20781"/>
<dbReference type="Proteomes" id="UP000001940">
    <property type="component" value="Chromosome III"/>
</dbReference>
<dbReference type="Bgee" id="WBGene00000279">
    <property type="expression patterns" value="Expressed in anatomical system and 4 other cell types or tissues"/>
</dbReference>
<dbReference type="ExpressionAtlas" id="Q20781">
    <property type="expression patterns" value="baseline"/>
</dbReference>
<dbReference type="GO" id="GO:0005576">
    <property type="term" value="C:extracellular region"/>
    <property type="evidence" value="ECO:0007669"/>
    <property type="project" value="UniProtKB-SubCell"/>
</dbReference>
<dbReference type="GO" id="GO:0004089">
    <property type="term" value="F:carbonate dehydratase activity"/>
    <property type="evidence" value="ECO:0007669"/>
    <property type="project" value="InterPro"/>
</dbReference>
<dbReference type="GO" id="GO:0016836">
    <property type="term" value="F:hydro-lyase activity"/>
    <property type="evidence" value="ECO:0000318"/>
    <property type="project" value="GO_Central"/>
</dbReference>
<dbReference type="GO" id="GO:0008270">
    <property type="term" value="F:zinc ion binding"/>
    <property type="evidence" value="ECO:0007669"/>
    <property type="project" value="InterPro"/>
</dbReference>
<dbReference type="CDD" id="cd03121">
    <property type="entry name" value="alpha_CARP_X_XI_like"/>
    <property type="match status" value="1"/>
</dbReference>
<dbReference type="Gene3D" id="3.10.200.10">
    <property type="entry name" value="Alpha carbonic anhydrase"/>
    <property type="match status" value="2"/>
</dbReference>
<dbReference type="InterPro" id="IPR041878">
    <property type="entry name" value="Alpha_CARP_X/XI"/>
</dbReference>
<dbReference type="InterPro" id="IPR001148">
    <property type="entry name" value="CA_dom"/>
</dbReference>
<dbReference type="InterPro" id="IPR036398">
    <property type="entry name" value="CA_dom_sf"/>
</dbReference>
<dbReference type="InterPro" id="IPR023561">
    <property type="entry name" value="Carbonic_anhydrase_a-class"/>
</dbReference>
<dbReference type="PANTHER" id="PTHR18952">
    <property type="entry name" value="CARBONIC ANHYDRASE"/>
    <property type="match status" value="1"/>
</dbReference>
<dbReference type="PANTHER" id="PTHR18952:SF258">
    <property type="entry name" value="CARBONIC ANHYDRASE-LIKE PROTEIN 1-RELATED"/>
    <property type="match status" value="1"/>
</dbReference>
<dbReference type="Pfam" id="PF00194">
    <property type="entry name" value="Carb_anhydrase"/>
    <property type="match status" value="1"/>
</dbReference>
<dbReference type="SMART" id="SM01057">
    <property type="entry name" value="Carb_anhydrase"/>
    <property type="match status" value="1"/>
</dbReference>
<dbReference type="SUPFAM" id="SSF51069">
    <property type="entry name" value="Carbonic anhydrase"/>
    <property type="match status" value="1"/>
</dbReference>
<dbReference type="PROSITE" id="PS51144">
    <property type="entry name" value="ALPHA_CA_2"/>
    <property type="match status" value="1"/>
</dbReference>
<accession>Q20781</accession>
<reference key="1">
    <citation type="journal article" date="1998" name="Science">
        <title>Genome sequence of the nematode C. elegans: a platform for investigating biology.</title>
        <authorList>
            <consortium name="The C. elegans sequencing consortium"/>
        </authorList>
    </citation>
    <scope>NUCLEOTIDE SEQUENCE [LARGE SCALE GENOMIC DNA]</scope>
    <source>
        <strain>Bristol N2</strain>
    </source>
</reference>
<protein>
    <recommendedName>
        <fullName>Putative carbonic anhydrase-like protein 1</fullName>
    </recommendedName>
</protein>
<feature type="signal peptide" evidence="2">
    <location>
        <begin position="1"/>
        <end position="25"/>
    </location>
</feature>
<feature type="chain" id="PRO_0000004254" description="Putative carbonic anhydrase-like protein 1">
    <location>
        <begin position="26"/>
        <end position="365"/>
    </location>
</feature>
<feature type="domain" description="Alpha-carbonic anhydrase" evidence="3">
    <location>
        <begin position="28"/>
        <end position="356"/>
    </location>
</feature>
<feature type="active site" evidence="1">
    <location>
        <position position="223"/>
    </location>
</feature>
<feature type="binding site" evidence="1">
    <location>
        <begin position="295"/>
        <end position="296"/>
    </location>
    <ligand>
        <name>substrate</name>
    </ligand>
</feature>
<feature type="binding site" evidence="1">
    <location>
        <position position="295"/>
    </location>
    <ligand>
        <name>substrate</name>
    </ligand>
</feature>
<sequence length="365" mass="42442">MRFECSHFPLFLIILTCHISPLKSSQNYQWSYDSDVFGGPHFWGLVEKDWWMCKKGRLQSPIDIQPDRLLFDASVKPVSYAELNFFLIIYLTISLKLMRYIFTCAHLFACNKKLGTWNRIFGANIAKFRAWVVYIIIFHAQVPQLQVVSEFVNTGQMVRVRIGYSSKKPSVNITSGPLYGYRYRVQRIDFHMGRKNENGSEHTINGRRFPMEVQLVAYNTDLYPNFTSASKSPHGIAILSVLVDFGPETNQELIKLTIATASISYKDQRVQLADFEPWRLLPFTRDIITYEGSLTSPGCHETVTWIILNQPIFIKKEHFEEWSHLYLSMEGAEKVPVAPNFRKIQETNNRLVRTNIQHKVWIFLS</sequence>
<evidence type="ECO:0000250" key="1"/>
<evidence type="ECO:0000255" key="2"/>
<evidence type="ECO:0000255" key="3">
    <source>
        <dbReference type="PROSITE-ProRule" id="PRU01134"/>
    </source>
</evidence>
<evidence type="ECO:0000305" key="4"/>